<proteinExistence type="evidence at protein level"/>
<keyword id="KW-1267">Proteomics identification</keyword>
<keyword id="KW-1185">Reference proteome</keyword>
<accession>A6ZKI3</accession>
<comment type="interaction">
    <interactant intactId="EBI-10174072">
        <id>A6ZKI3</id>
    </interactant>
    <interactant intactId="EBI-10171570">
        <id>Q68D86</id>
        <label>CCDC102B</label>
    </interactant>
    <organismsDiffer>false</organismsDiffer>
    <experiments>3</experiments>
</comment>
<comment type="interaction">
    <interactant intactId="EBI-10174072">
        <id>A6ZKI3</id>
    </interactant>
    <interactant intactId="EBI-711280">
        <id>P42772</id>
        <label>CDKN2B</label>
    </interactant>
    <organismsDiffer>false</organismsDiffer>
    <experiments>3</experiments>
</comment>
<comment type="interaction">
    <interactant intactId="EBI-10174072">
        <id>A6ZKI3</id>
    </interactant>
    <interactant intactId="EBI-751540">
        <id>O95872</id>
        <label>GPANK1</label>
    </interactant>
    <organismsDiffer>false</organismsDiffer>
    <experiments>3</experiments>
</comment>
<comment type="interaction">
    <interactant intactId="EBI-10174072">
        <id>A6ZKI3</id>
    </interactant>
    <interactant intactId="EBI-11959475">
        <id>P25791-3</id>
        <label>LMO2</label>
    </interactant>
    <organismsDiffer>false</organismsDiffer>
    <experiments>3</experiments>
</comment>
<comment type="interaction">
    <interactant intactId="EBI-10174072">
        <id>A6ZKI3</id>
    </interactant>
    <interactant intactId="EBI-2858265">
        <id>Q86TG7</id>
        <label>PEG10</label>
    </interactant>
    <organismsDiffer>false</organismsDiffer>
    <experiments>5</experiments>
</comment>
<comment type="interaction">
    <interactant intactId="EBI-10174072">
        <id>A6ZKI3</id>
    </interactant>
    <interactant intactId="EBI-6259410">
        <id>Q86TG7-2</id>
        <label>PEG10</label>
    </interactant>
    <organismsDiffer>false</organismsDiffer>
    <experiments>10</experiments>
</comment>
<comment type="interaction">
    <interactant intactId="EBI-10174072">
        <id>A6ZKI3</id>
    </interactant>
    <interactant intactId="EBI-10829018">
        <id>Q04864-2</id>
        <label>REL</label>
    </interactant>
    <organismsDiffer>false</organismsDiffer>
    <experiments>3</experiments>
</comment>
<comment type="interaction">
    <interactant intactId="EBI-10174072">
        <id>A6ZKI3</id>
    </interactant>
    <interactant intactId="EBI-14067109">
        <id>Q96NU1</id>
        <label>SAMD11</label>
    </interactant>
    <organismsDiffer>false</organismsDiffer>
    <experiments>3</experiments>
</comment>
<comment type="interaction">
    <interactant intactId="EBI-10174072">
        <id>A6ZKI3</id>
    </interactant>
    <interactant intactId="EBI-741480">
        <id>Q9UMX0</id>
        <label>UBQLN1</label>
    </interactant>
    <organismsDiffer>false</organismsDiffer>
    <experiments>6</experiments>
</comment>
<comment type="interaction">
    <interactant intactId="EBI-10174072">
        <id>A6ZKI3</id>
    </interactant>
    <interactant intactId="EBI-10173939">
        <id>Q9UMX0-2</id>
        <label>UBQLN1</label>
    </interactant>
    <organismsDiffer>false</organismsDiffer>
    <experiments>3</experiments>
</comment>
<comment type="interaction">
    <interactant intactId="EBI-10174072">
        <id>A6ZKI3</id>
    </interactant>
    <interactant intactId="EBI-947187">
        <id>Q9UHD9</id>
        <label>UBQLN2</label>
    </interactant>
    <organismsDiffer>false</organismsDiffer>
    <experiments>5</experiments>
</comment>
<comment type="miscellaneous">
    <text evidence="1">RTL8C is one of at least 11 genes called Mar or Mart related to long terminal repeat retrotransposons. They do not correspond to functional retrotransposons, but rather to neofunctionalized retrotransposons genes.</text>
</comment>
<comment type="similarity">
    <text evidence="2">Belongs to the FAM127 family.</text>
</comment>
<comment type="caution">
    <text evidence="2">There seem to be two proteins that can be transcribed from FAM127A, one with a C-terminal CAAX box (AC O15255) and a smaller protein (the sequence shown here) that seems to be encoded by a multicopy gene originating from a retrotransposon.</text>
</comment>
<organism>
    <name type="scientific">Homo sapiens</name>
    <name type="common">Human</name>
    <dbReference type="NCBI Taxonomy" id="9606"/>
    <lineage>
        <taxon>Eukaryota</taxon>
        <taxon>Metazoa</taxon>
        <taxon>Chordata</taxon>
        <taxon>Craniata</taxon>
        <taxon>Vertebrata</taxon>
        <taxon>Euteleostomi</taxon>
        <taxon>Mammalia</taxon>
        <taxon>Eutheria</taxon>
        <taxon>Euarchontoglires</taxon>
        <taxon>Primates</taxon>
        <taxon>Haplorrhini</taxon>
        <taxon>Catarrhini</taxon>
        <taxon>Hominidae</taxon>
        <taxon>Homo</taxon>
    </lineage>
</organism>
<gene>
    <name evidence="3" type="primary">RTL8C</name>
    <name evidence="3" type="synonym">CXX1</name>
    <name evidence="3" type="synonym">FAM127A</name>
    <name evidence="3" type="synonym">MAR8</name>
    <name evidence="3" type="synonym">MAR8C</name>
    <name evidence="3" type="synonym">MART8</name>
</gene>
<dbReference type="EMBL" id="AL136169">
    <property type="status" value="NOT_ANNOTATED_CDS"/>
    <property type="molecule type" value="Genomic_DNA"/>
</dbReference>
<dbReference type="EMBL" id="BC002385">
    <property type="protein sequence ID" value="AAH02385.4"/>
    <property type="molecule type" value="mRNA"/>
</dbReference>
<dbReference type="EMBL" id="BC002410">
    <property type="protein sequence ID" value="AAH02410.4"/>
    <property type="molecule type" value="mRNA"/>
</dbReference>
<dbReference type="CCDS" id="CCDS43997.1"/>
<dbReference type="RefSeq" id="NP_001071639.1">
    <property type="nucleotide sequence ID" value="NM_001078171.2"/>
</dbReference>
<dbReference type="SMR" id="A6ZKI3"/>
<dbReference type="BioGRID" id="114446">
    <property type="interactions" value="52"/>
</dbReference>
<dbReference type="IntAct" id="A6ZKI3">
    <property type="interactions" value="46"/>
</dbReference>
<dbReference type="STRING" id="9606.ENSP00000257013"/>
<dbReference type="iPTMnet" id="A6ZKI3"/>
<dbReference type="PhosphoSitePlus" id="A6ZKI3"/>
<dbReference type="BioMuta" id="RTL8C"/>
<dbReference type="jPOST" id="A6ZKI3"/>
<dbReference type="MassIVE" id="A6ZKI3"/>
<dbReference type="PaxDb" id="9606-ENSP00000257013"/>
<dbReference type="PeptideAtlas" id="A6ZKI3"/>
<dbReference type="ProteomicsDB" id="1787"/>
<dbReference type="Pumba" id="A6ZKI3"/>
<dbReference type="TopDownProteomics" id="A6ZKI3"/>
<dbReference type="Antibodypedia" id="30334">
    <property type="antibodies" value="98 antibodies from 16 providers"/>
</dbReference>
<dbReference type="DNASU" id="8933"/>
<dbReference type="Ensembl" id="ENST00000257013.9">
    <property type="protein sequence ID" value="ENSP00000257013.7"/>
    <property type="gene ID" value="ENSG00000134590.14"/>
</dbReference>
<dbReference type="GeneID" id="8933"/>
<dbReference type="KEGG" id="hsa:8933"/>
<dbReference type="MANE-Select" id="ENST00000257013.9">
    <property type="protein sequence ID" value="ENSP00000257013.7"/>
    <property type="RefSeq nucleotide sequence ID" value="NM_001078171.2"/>
    <property type="RefSeq protein sequence ID" value="NP_001071639.1"/>
</dbReference>
<dbReference type="UCSC" id="uc004eyd.4">
    <property type="organism name" value="human"/>
</dbReference>
<dbReference type="AGR" id="HGNC:2569"/>
<dbReference type="CTD" id="8933"/>
<dbReference type="DisGeNET" id="8933"/>
<dbReference type="GeneCards" id="RTL8C"/>
<dbReference type="HGNC" id="HGNC:2569">
    <property type="gene designation" value="RTL8C"/>
</dbReference>
<dbReference type="HPA" id="ENSG00000134590">
    <property type="expression patterns" value="Low tissue specificity"/>
</dbReference>
<dbReference type="MIM" id="300213">
    <property type="type" value="gene"/>
</dbReference>
<dbReference type="neXtProt" id="NX_A6ZKI3"/>
<dbReference type="OpenTargets" id="ENSG00000134590"/>
<dbReference type="PharmGKB" id="PA162385908"/>
<dbReference type="VEuPathDB" id="HostDB:ENSG00000134590"/>
<dbReference type="eggNOG" id="ENOG502RU23">
    <property type="taxonomic scope" value="Eukaryota"/>
</dbReference>
<dbReference type="GeneTree" id="ENSGT00940000154665"/>
<dbReference type="HOGENOM" id="CLU_154949_0_0_1"/>
<dbReference type="OMA" id="KCLIATP"/>
<dbReference type="OrthoDB" id="9508136at2759"/>
<dbReference type="PhylomeDB" id="A6ZKI3"/>
<dbReference type="TreeFam" id="TF337843"/>
<dbReference type="PathwayCommons" id="A6ZKI3"/>
<dbReference type="SignaLink" id="A6ZKI3"/>
<dbReference type="BioGRID-ORCS" id="8933">
    <property type="hits" value="15 hits in 772 CRISPR screens"/>
</dbReference>
<dbReference type="ChiTaRS" id="RTL8C">
    <property type="organism name" value="human"/>
</dbReference>
<dbReference type="GeneWiki" id="FAM127A"/>
<dbReference type="GenomeRNAi" id="8933"/>
<dbReference type="Pharos" id="A6ZKI3">
    <property type="development level" value="Tbio"/>
</dbReference>
<dbReference type="Proteomes" id="UP000005640">
    <property type="component" value="Chromosome X"/>
</dbReference>
<dbReference type="Bgee" id="ENSG00000134590">
    <property type="expression patterns" value="Expressed in Brodmann (1909) area 10 and 208 other cell types or tissues"/>
</dbReference>
<dbReference type="InterPro" id="IPR032549">
    <property type="entry name" value="DUF4939"/>
</dbReference>
<dbReference type="Pfam" id="PF16297">
    <property type="entry name" value="DUF4939"/>
    <property type="match status" value="1"/>
</dbReference>
<evidence type="ECO:0000269" key="1">
    <source>
    </source>
</evidence>
<evidence type="ECO:0000305" key="2"/>
<evidence type="ECO:0000312" key="3">
    <source>
        <dbReference type="HGNC" id="HGNC:2569"/>
    </source>
</evidence>
<reference key="1">
    <citation type="journal article" date="2005" name="Nature">
        <title>The DNA sequence of the human X chromosome.</title>
        <authorList>
            <person name="Ross M.T."/>
            <person name="Grafham D.V."/>
            <person name="Coffey A.J."/>
            <person name="Scherer S."/>
            <person name="McLay K."/>
            <person name="Muzny D."/>
            <person name="Platzer M."/>
            <person name="Howell G.R."/>
            <person name="Burrows C."/>
            <person name="Bird C.P."/>
            <person name="Frankish A."/>
            <person name="Lovell F.L."/>
            <person name="Howe K.L."/>
            <person name="Ashurst J.L."/>
            <person name="Fulton R.S."/>
            <person name="Sudbrak R."/>
            <person name="Wen G."/>
            <person name="Jones M.C."/>
            <person name="Hurles M.E."/>
            <person name="Andrews T.D."/>
            <person name="Scott C.E."/>
            <person name="Searle S."/>
            <person name="Ramser J."/>
            <person name="Whittaker A."/>
            <person name="Deadman R."/>
            <person name="Carter N.P."/>
            <person name="Hunt S.E."/>
            <person name="Chen R."/>
            <person name="Cree A."/>
            <person name="Gunaratne P."/>
            <person name="Havlak P."/>
            <person name="Hodgson A."/>
            <person name="Metzker M.L."/>
            <person name="Richards S."/>
            <person name="Scott G."/>
            <person name="Steffen D."/>
            <person name="Sodergren E."/>
            <person name="Wheeler D.A."/>
            <person name="Worley K.C."/>
            <person name="Ainscough R."/>
            <person name="Ambrose K.D."/>
            <person name="Ansari-Lari M.A."/>
            <person name="Aradhya S."/>
            <person name="Ashwell R.I."/>
            <person name="Babbage A.K."/>
            <person name="Bagguley C.L."/>
            <person name="Ballabio A."/>
            <person name="Banerjee R."/>
            <person name="Barker G.E."/>
            <person name="Barlow K.F."/>
            <person name="Barrett I.P."/>
            <person name="Bates K.N."/>
            <person name="Beare D.M."/>
            <person name="Beasley H."/>
            <person name="Beasley O."/>
            <person name="Beck A."/>
            <person name="Bethel G."/>
            <person name="Blechschmidt K."/>
            <person name="Brady N."/>
            <person name="Bray-Allen S."/>
            <person name="Bridgeman A.M."/>
            <person name="Brown A.J."/>
            <person name="Brown M.J."/>
            <person name="Bonnin D."/>
            <person name="Bruford E.A."/>
            <person name="Buhay C."/>
            <person name="Burch P."/>
            <person name="Burford D."/>
            <person name="Burgess J."/>
            <person name="Burrill W."/>
            <person name="Burton J."/>
            <person name="Bye J.M."/>
            <person name="Carder C."/>
            <person name="Carrel L."/>
            <person name="Chako J."/>
            <person name="Chapman J.C."/>
            <person name="Chavez D."/>
            <person name="Chen E."/>
            <person name="Chen G."/>
            <person name="Chen Y."/>
            <person name="Chen Z."/>
            <person name="Chinault C."/>
            <person name="Ciccodicola A."/>
            <person name="Clark S.Y."/>
            <person name="Clarke G."/>
            <person name="Clee C.M."/>
            <person name="Clegg S."/>
            <person name="Clerc-Blankenburg K."/>
            <person name="Clifford K."/>
            <person name="Cobley V."/>
            <person name="Cole C.G."/>
            <person name="Conquer J.S."/>
            <person name="Corby N."/>
            <person name="Connor R.E."/>
            <person name="David R."/>
            <person name="Davies J."/>
            <person name="Davis C."/>
            <person name="Davis J."/>
            <person name="Delgado O."/>
            <person name="Deshazo D."/>
            <person name="Dhami P."/>
            <person name="Ding Y."/>
            <person name="Dinh H."/>
            <person name="Dodsworth S."/>
            <person name="Draper H."/>
            <person name="Dugan-Rocha S."/>
            <person name="Dunham A."/>
            <person name="Dunn M."/>
            <person name="Durbin K.J."/>
            <person name="Dutta I."/>
            <person name="Eades T."/>
            <person name="Ellwood M."/>
            <person name="Emery-Cohen A."/>
            <person name="Errington H."/>
            <person name="Evans K.L."/>
            <person name="Faulkner L."/>
            <person name="Francis F."/>
            <person name="Frankland J."/>
            <person name="Fraser A.E."/>
            <person name="Galgoczy P."/>
            <person name="Gilbert J."/>
            <person name="Gill R."/>
            <person name="Gloeckner G."/>
            <person name="Gregory S.G."/>
            <person name="Gribble S."/>
            <person name="Griffiths C."/>
            <person name="Grocock R."/>
            <person name="Gu Y."/>
            <person name="Gwilliam R."/>
            <person name="Hamilton C."/>
            <person name="Hart E.A."/>
            <person name="Hawes A."/>
            <person name="Heath P.D."/>
            <person name="Heitmann K."/>
            <person name="Hennig S."/>
            <person name="Hernandez J."/>
            <person name="Hinzmann B."/>
            <person name="Ho S."/>
            <person name="Hoffs M."/>
            <person name="Howden P.J."/>
            <person name="Huckle E.J."/>
            <person name="Hume J."/>
            <person name="Hunt P.J."/>
            <person name="Hunt A.R."/>
            <person name="Isherwood J."/>
            <person name="Jacob L."/>
            <person name="Johnson D."/>
            <person name="Jones S."/>
            <person name="de Jong P.J."/>
            <person name="Joseph S.S."/>
            <person name="Keenan S."/>
            <person name="Kelly S."/>
            <person name="Kershaw J.K."/>
            <person name="Khan Z."/>
            <person name="Kioschis P."/>
            <person name="Klages S."/>
            <person name="Knights A.J."/>
            <person name="Kosiura A."/>
            <person name="Kovar-Smith C."/>
            <person name="Laird G.K."/>
            <person name="Langford C."/>
            <person name="Lawlor S."/>
            <person name="Leversha M."/>
            <person name="Lewis L."/>
            <person name="Liu W."/>
            <person name="Lloyd C."/>
            <person name="Lloyd D.M."/>
            <person name="Loulseged H."/>
            <person name="Loveland J.E."/>
            <person name="Lovell J.D."/>
            <person name="Lozado R."/>
            <person name="Lu J."/>
            <person name="Lyne R."/>
            <person name="Ma J."/>
            <person name="Maheshwari M."/>
            <person name="Matthews L.H."/>
            <person name="McDowall J."/>
            <person name="McLaren S."/>
            <person name="McMurray A."/>
            <person name="Meidl P."/>
            <person name="Meitinger T."/>
            <person name="Milne S."/>
            <person name="Miner G."/>
            <person name="Mistry S.L."/>
            <person name="Morgan M."/>
            <person name="Morris S."/>
            <person name="Mueller I."/>
            <person name="Mullikin J.C."/>
            <person name="Nguyen N."/>
            <person name="Nordsiek G."/>
            <person name="Nyakatura G."/>
            <person name="O'dell C.N."/>
            <person name="Okwuonu G."/>
            <person name="Palmer S."/>
            <person name="Pandian R."/>
            <person name="Parker D."/>
            <person name="Parrish J."/>
            <person name="Pasternak S."/>
            <person name="Patel D."/>
            <person name="Pearce A.V."/>
            <person name="Pearson D.M."/>
            <person name="Pelan S.E."/>
            <person name="Perez L."/>
            <person name="Porter K.M."/>
            <person name="Ramsey Y."/>
            <person name="Reichwald K."/>
            <person name="Rhodes S."/>
            <person name="Ridler K.A."/>
            <person name="Schlessinger D."/>
            <person name="Schueler M.G."/>
            <person name="Sehra H.K."/>
            <person name="Shaw-Smith C."/>
            <person name="Shen H."/>
            <person name="Sheridan E.M."/>
            <person name="Shownkeen R."/>
            <person name="Skuce C.D."/>
            <person name="Smith M.L."/>
            <person name="Sotheran E.C."/>
            <person name="Steingruber H.E."/>
            <person name="Steward C.A."/>
            <person name="Storey R."/>
            <person name="Swann R.M."/>
            <person name="Swarbreck D."/>
            <person name="Tabor P.E."/>
            <person name="Taudien S."/>
            <person name="Taylor T."/>
            <person name="Teague B."/>
            <person name="Thomas K."/>
            <person name="Thorpe A."/>
            <person name="Timms K."/>
            <person name="Tracey A."/>
            <person name="Trevanion S."/>
            <person name="Tromans A.C."/>
            <person name="d'Urso M."/>
            <person name="Verduzco D."/>
            <person name="Villasana D."/>
            <person name="Waldron L."/>
            <person name="Wall M."/>
            <person name="Wang Q."/>
            <person name="Warren J."/>
            <person name="Warry G.L."/>
            <person name="Wei X."/>
            <person name="West A."/>
            <person name="Whitehead S.L."/>
            <person name="Whiteley M.N."/>
            <person name="Wilkinson J.E."/>
            <person name="Willey D.L."/>
            <person name="Williams G."/>
            <person name="Williams L."/>
            <person name="Williamson A."/>
            <person name="Williamson H."/>
            <person name="Wilming L."/>
            <person name="Woodmansey R.L."/>
            <person name="Wray P.W."/>
            <person name="Yen J."/>
            <person name="Zhang J."/>
            <person name="Zhou J."/>
            <person name="Zoghbi H."/>
            <person name="Zorilla S."/>
            <person name="Buck D."/>
            <person name="Reinhardt R."/>
            <person name="Poustka A."/>
            <person name="Rosenthal A."/>
            <person name="Lehrach H."/>
            <person name="Meindl A."/>
            <person name="Minx P.J."/>
            <person name="Hillier L.W."/>
            <person name="Willard H.F."/>
            <person name="Wilson R.K."/>
            <person name="Waterston R.H."/>
            <person name="Rice C.M."/>
            <person name="Vaudin M."/>
            <person name="Coulson A."/>
            <person name="Nelson D.L."/>
            <person name="Weinstock G."/>
            <person name="Sulston J.E."/>
            <person name="Durbin R.M."/>
            <person name="Hubbard T."/>
            <person name="Gibbs R.A."/>
            <person name="Beck S."/>
            <person name="Rogers J."/>
            <person name="Bentley D.R."/>
        </authorList>
    </citation>
    <scope>NUCLEOTIDE SEQUENCE [LARGE SCALE GENOMIC DNA]</scope>
</reference>
<reference key="2">
    <citation type="journal article" date="2004" name="Genome Res.">
        <title>The status, quality, and expansion of the NIH full-length cDNA project: the Mammalian Gene Collection (MGC).</title>
        <authorList>
            <consortium name="The MGC Project Team"/>
        </authorList>
    </citation>
    <scope>NUCLEOTIDE SEQUENCE [LARGE SCALE MRNA]</scope>
    <source>
        <tissue>Muscle</tissue>
    </source>
</reference>
<reference key="3">
    <citation type="journal article" date="2005" name="Cytogenet. Genome Res.">
        <title>A family of neofunctionalized Ty3/gypsy retrotransposon genes in mammalian genomes.</title>
        <authorList>
            <person name="Brandt J."/>
            <person name="Veith A.-M."/>
            <person name="Volff J.-N."/>
        </authorList>
    </citation>
    <scope>IDENTIFICATION</scope>
    <scope>GENE FAMILY</scope>
</reference>
<reference key="4">
    <citation type="journal article" date="2005" name="Gene">
        <title>Transposable elements as a source of genetic innovation: expression and evolution of a family of retrotransposon-derived neogenes in mammals.</title>
        <authorList>
            <person name="Brandt J."/>
            <person name="Schrauth S."/>
            <person name="Veith A.-M."/>
            <person name="Froschauer A."/>
            <person name="Haneke T."/>
            <person name="Schultheis C."/>
            <person name="Gessler M."/>
            <person name="Leimeister C."/>
            <person name="Volff J.-N."/>
        </authorList>
    </citation>
    <scope>IDENTIFICATION</scope>
</reference>
<reference key="5">
    <citation type="journal article" date="2011" name="BMC Syst. Biol.">
        <title>Initial characterization of the human central proteome.</title>
        <authorList>
            <person name="Burkard T.R."/>
            <person name="Planyavsky M."/>
            <person name="Kaupe I."/>
            <person name="Breitwieser F.P."/>
            <person name="Buerckstuemmer T."/>
            <person name="Bennett K.L."/>
            <person name="Superti-Furga G."/>
            <person name="Colinge J."/>
        </authorList>
    </citation>
    <scope>IDENTIFICATION BY MASS SPECTROMETRY [LARGE SCALE ANALYSIS]</scope>
</reference>
<name>RTL8C_HUMAN</name>
<feature type="chain" id="PRO_0000311726" description="Retrotransposon Gag-like protein 8C">
    <location>
        <begin position="1"/>
        <end position="113"/>
    </location>
</feature>
<feature type="sequence variant" id="VAR_053975" description="In dbSNP:rs1056977.">
    <original>S</original>
    <variation>N</variation>
    <location>
        <position position="60"/>
    </location>
</feature>
<sequence length="113" mass="13171">MDGRVQLIKALLALPIRPATRRWRNPIPFPETFDGDTDRLPEFIVQTGSYMFVDENTFSSDALKVTFLITRLTGPALQWVIPYIKKESPLLNDYRGFLAEMKRVFGWEEDEDF</sequence>
<protein>
    <recommendedName>
        <fullName evidence="3">Retrotransposon Gag-like protein 8C</fullName>
    </recommendedName>
    <alternativeName>
        <fullName evidence="3">Mammalian retrotransposon derived protein 8C</fullName>
    </alternativeName>
</protein>